<dbReference type="EC" id="6.3.3.1" evidence="1"/>
<dbReference type="EMBL" id="CP000890">
    <property type="protein sequence ID" value="ABX77697.1"/>
    <property type="molecule type" value="Genomic_DNA"/>
</dbReference>
<dbReference type="SMR" id="A9NA98"/>
<dbReference type="KEGG" id="cbs:COXBURSA331_A1928"/>
<dbReference type="HOGENOM" id="CLU_047116_0_0_6"/>
<dbReference type="UniPathway" id="UPA00074">
    <property type="reaction ID" value="UER00129"/>
</dbReference>
<dbReference type="GO" id="GO:0005829">
    <property type="term" value="C:cytosol"/>
    <property type="evidence" value="ECO:0007669"/>
    <property type="project" value="TreeGrafter"/>
</dbReference>
<dbReference type="GO" id="GO:0005524">
    <property type="term" value="F:ATP binding"/>
    <property type="evidence" value="ECO:0007669"/>
    <property type="project" value="UniProtKB-KW"/>
</dbReference>
<dbReference type="GO" id="GO:0004637">
    <property type="term" value="F:phosphoribosylamine-glycine ligase activity"/>
    <property type="evidence" value="ECO:0007669"/>
    <property type="project" value="TreeGrafter"/>
</dbReference>
<dbReference type="GO" id="GO:0004641">
    <property type="term" value="F:phosphoribosylformylglycinamidine cyclo-ligase activity"/>
    <property type="evidence" value="ECO:0007669"/>
    <property type="project" value="UniProtKB-UniRule"/>
</dbReference>
<dbReference type="GO" id="GO:0006189">
    <property type="term" value="P:'de novo' IMP biosynthetic process"/>
    <property type="evidence" value="ECO:0007669"/>
    <property type="project" value="UniProtKB-UniRule"/>
</dbReference>
<dbReference type="GO" id="GO:0046084">
    <property type="term" value="P:adenine biosynthetic process"/>
    <property type="evidence" value="ECO:0007669"/>
    <property type="project" value="TreeGrafter"/>
</dbReference>
<dbReference type="CDD" id="cd02196">
    <property type="entry name" value="PurM"/>
    <property type="match status" value="1"/>
</dbReference>
<dbReference type="FunFam" id="3.30.1330.10:FF:000001">
    <property type="entry name" value="Phosphoribosylformylglycinamidine cyclo-ligase"/>
    <property type="match status" value="1"/>
</dbReference>
<dbReference type="FunFam" id="3.90.650.10:FF:000001">
    <property type="entry name" value="Phosphoribosylformylglycinamidine cyclo-ligase"/>
    <property type="match status" value="1"/>
</dbReference>
<dbReference type="Gene3D" id="3.90.650.10">
    <property type="entry name" value="PurM-like C-terminal domain"/>
    <property type="match status" value="1"/>
</dbReference>
<dbReference type="Gene3D" id="3.30.1330.10">
    <property type="entry name" value="PurM-like, N-terminal domain"/>
    <property type="match status" value="1"/>
</dbReference>
<dbReference type="HAMAP" id="MF_00741">
    <property type="entry name" value="AIRS"/>
    <property type="match status" value="1"/>
</dbReference>
<dbReference type="InterPro" id="IPR010918">
    <property type="entry name" value="PurM-like_C_dom"/>
</dbReference>
<dbReference type="InterPro" id="IPR036676">
    <property type="entry name" value="PurM-like_C_sf"/>
</dbReference>
<dbReference type="InterPro" id="IPR016188">
    <property type="entry name" value="PurM-like_N"/>
</dbReference>
<dbReference type="InterPro" id="IPR036921">
    <property type="entry name" value="PurM-like_N_sf"/>
</dbReference>
<dbReference type="InterPro" id="IPR004733">
    <property type="entry name" value="PurM_cligase"/>
</dbReference>
<dbReference type="NCBIfam" id="TIGR00878">
    <property type="entry name" value="purM"/>
    <property type="match status" value="1"/>
</dbReference>
<dbReference type="PANTHER" id="PTHR10520:SF12">
    <property type="entry name" value="TRIFUNCTIONAL PURINE BIOSYNTHETIC PROTEIN ADENOSINE-3"/>
    <property type="match status" value="1"/>
</dbReference>
<dbReference type="PANTHER" id="PTHR10520">
    <property type="entry name" value="TRIFUNCTIONAL PURINE BIOSYNTHETIC PROTEIN ADENOSINE-3-RELATED"/>
    <property type="match status" value="1"/>
</dbReference>
<dbReference type="Pfam" id="PF00586">
    <property type="entry name" value="AIRS"/>
    <property type="match status" value="1"/>
</dbReference>
<dbReference type="Pfam" id="PF02769">
    <property type="entry name" value="AIRS_C"/>
    <property type="match status" value="1"/>
</dbReference>
<dbReference type="SUPFAM" id="SSF56042">
    <property type="entry name" value="PurM C-terminal domain-like"/>
    <property type="match status" value="1"/>
</dbReference>
<dbReference type="SUPFAM" id="SSF55326">
    <property type="entry name" value="PurM N-terminal domain-like"/>
    <property type="match status" value="1"/>
</dbReference>
<gene>
    <name evidence="1" type="primary">purM</name>
    <name type="ordered locus">COXBURSA331_A1928</name>
</gene>
<comment type="catalytic activity">
    <reaction evidence="1">
        <text>2-formamido-N(1)-(5-O-phospho-beta-D-ribosyl)acetamidine + ATP = 5-amino-1-(5-phospho-beta-D-ribosyl)imidazole + ADP + phosphate + H(+)</text>
        <dbReference type="Rhea" id="RHEA:23032"/>
        <dbReference type="ChEBI" id="CHEBI:15378"/>
        <dbReference type="ChEBI" id="CHEBI:30616"/>
        <dbReference type="ChEBI" id="CHEBI:43474"/>
        <dbReference type="ChEBI" id="CHEBI:137981"/>
        <dbReference type="ChEBI" id="CHEBI:147287"/>
        <dbReference type="ChEBI" id="CHEBI:456216"/>
        <dbReference type="EC" id="6.3.3.1"/>
    </reaction>
</comment>
<comment type="pathway">
    <text evidence="1">Purine metabolism; IMP biosynthesis via de novo pathway; 5-amino-1-(5-phospho-D-ribosyl)imidazole from N(2)-formyl-N(1)-(5-phospho-D-ribosyl)glycinamide: step 2/2.</text>
</comment>
<comment type="subcellular location">
    <subcellularLocation>
        <location evidence="1">Cytoplasm</location>
    </subcellularLocation>
</comment>
<comment type="similarity">
    <text evidence="1">Belongs to the AIR synthase family.</text>
</comment>
<name>PUR5_COXBR</name>
<accession>A9NA98</accession>
<feature type="chain" id="PRO_1000083456" description="Phosphoribosylformylglycinamidine cyclo-ligase">
    <location>
        <begin position="1"/>
        <end position="352"/>
    </location>
</feature>
<evidence type="ECO:0000255" key="1">
    <source>
        <dbReference type="HAMAP-Rule" id="MF_00741"/>
    </source>
</evidence>
<keyword id="KW-0067">ATP-binding</keyword>
<keyword id="KW-0963">Cytoplasm</keyword>
<keyword id="KW-0436">Ligase</keyword>
<keyword id="KW-0547">Nucleotide-binding</keyword>
<keyword id="KW-0658">Purine biosynthesis</keyword>
<protein>
    <recommendedName>
        <fullName evidence="1">Phosphoribosylformylglycinamidine cyclo-ligase</fullName>
        <ecNumber evidence="1">6.3.3.1</ecNumber>
    </recommendedName>
    <alternativeName>
        <fullName evidence="1">AIR synthase</fullName>
    </alternativeName>
    <alternativeName>
        <fullName evidence="1">AIRS</fullName>
    </alternativeName>
    <alternativeName>
        <fullName evidence="1">Phosphoribosyl-aminoimidazole synthetase</fullName>
    </alternativeName>
</protein>
<proteinExistence type="inferred from homology"/>
<sequence length="352" mass="38216">MQSMPDSTRHPPLSYCKAGVDIEKAADLVEAIKPIAKRTRRPGVLSGIGGFGGLFELPRGYKQPVLVSGTDGVGTKLKLAVELNRHDTIGIDLVAMCVNDVITTGAEPLFFLDYYATGHLNNEQAKQILTGIGAGCELAEVALIGGETAEMPGLYRQKDYDLAGFCVGVVEKEKIIDGSRVRVGDALIGIASSGPHSNGYSLIRKILARAKIPLSQSFENKSLADGLLAPTRIYVKTIKRLFSEINVHALAHITGGGLIENVPRVLPSYTQAVIDSNGWEWPAIFHWLQKQGKVPIEEMWRTFNMGVGMVLCLDKKEVRKTLELLAALGETAWILGEIQSSSEEQPRVTITP</sequence>
<reference key="1">
    <citation type="submission" date="2007-11" db="EMBL/GenBank/DDBJ databases">
        <title>Genome sequencing of phylogenetically and phenotypically diverse Coxiella burnetii isolates.</title>
        <authorList>
            <person name="Seshadri R."/>
            <person name="Samuel J.E."/>
        </authorList>
    </citation>
    <scope>NUCLEOTIDE SEQUENCE [LARGE SCALE GENOMIC DNA]</scope>
    <source>
        <strain>RSA 331 / Henzerling II</strain>
    </source>
</reference>
<organism>
    <name type="scientific">Coxiella burnetii (strain RSA 331 / Henzerling II)</name>
    <dbReference type="NCBI Taxonomy" id="360115"/>
    <lineage>
        <taxon>Bacteria</taxon>
        <taxon>Pseudomonadati</taxon>
        <taxon>Pseudomonadota</taxon>
        <taxon>Gammaproteobacteria</taxon>
        <taxon>Legionellales</taxon>
        <taxon>Coxiellaceae</taxon>
        <taxon>Coxiella</taxon>
    </lineage>
</organism>